<keyword id="KW-0029">Amino-acid transport</keyword>
<keyword id="KW-0325">Glycoprotein</keyword>
<keyword id="KW-0472">Membrane</keyword>
<keyword id="KW-1185">Reference proteome</keyword>
<keyword id="KW-0812">Transmembrane</keyword>
<keyword id="KW-1133">Transmembrane helix</keyword>
<keyword id="KW-0813">Transport</keyword>
<keyword id="KW-0926">Vacuole</keyword>
<dbReference type="EMBL" id="AAFI02000019">
    <property type="protein sequence ID" value="EAL68847.1"/>
    <property type="molecule type" value="Genomic_DNA"/>
</dbReference>
<dbReference type="RefSeq" id="XP_642710.1">
    <property type="nucleotide sequence ID" value="XM_637618.1"/>
</dbReference>
<dbReference type="SMR" id="Q550A6"/>
<dbReference type="FunCoup" id="Q550A6">
    <property type="interactions" value="2"/>
</dbReference>
<dbReference type="GlyCosmos" id="Q550A6">
    <property type="glycosylation" value="2 sites, No reported glycans"/>
</dbReference>
<dbReference type="GlyGen" id="Q550A6">
    <property type="glycosylation" value="2 sites"/>
</dbReference>
<dbReference type="PaxDb" id="44689-DDB0232251"/>
<dbReference type="EnsemblProtists" id="EAL68847">
    <property type="protein sequence ID" value="EAL68847"/>
    <property type="gene ID" value="DDB_G0277321"/>
</dbReference>
<dbReference type="GeneID" id="8620902"/>
<dbReference type="KEGG" id="ddi:DDB_G0277321"/>
<dbReference type="dictyBase" id="DDB_G0277321">
    <property type="gene designation" value="crtp2"/>
</dbReference>
<dbReference type="VEuPathDB" id="AmoebaDB:DDB_G0277321"/>
<dbReference type="eggNOG" id="ENOG502QR5M">
    <property type="taxonomic scope" value="Eukaryota"/>
</dbReference>
<dbReference type="HOGENOM" id="CLU_571661_0_0_1"/>
<dbReference type="InParanoid" id="Q550A6"/>
<dbReference type="OMA" id="CIRYRAR"/>
<dbReference type="PhylomeDB" id="Q550A6"/>
<dbReference type="PRO" id="PR:Q550A6"/>
<dbReference type="Proteomes" id="UP000002195">
    <property type="component" value="Chromosome 2"/>
</dbReference>
<dbReference type="GO" id="GO:0005774">
    <property type="term" value="C:vacuolar membrane"/>
    <property type="evidence" value="ECO:0007669"/>
    <property type="project" value="UniProtKB-SubCell"/>
</dbReference>
<dbReference type="GO" id="GO:0042910">
    <property type="term" value="F:xenobiotic transmembrane transporter activity"/>
    <property type="evidence" value="ECO:0007669"/>
    <property type="project" value="InterPro"/>
</dbReference>
<dbReference type="GO" id="GO:0006865">
    <property type="term" value="P:amino acid transport"/>
    <property type="evidence" value="ECO:0007669"/>
    <property type="project" value="UniProtKB-KW"/>
</dbReference>
<dbReference type="InterPro" id="IPR013936">
    <property type="entry name" value="CRT-like"/>
</dbReference>
<dbReference type="InterPro" id="IPR017258">
    <property type="entry name" value="Transprt_Chloroquine"/>
</dbReference>
<dbReference type="PANTHER" id="PTHR31326">
    <property type="entry name" value="PROTEIN CLT2, CHLOROPLASTIC"/>
    <property type="match status" value="1"/>
</dbReference>
<dbReference type="PANTHER" id="PTHR31326:SF1">
    <property type="entry name" value="PROTEIN CLT2, CHLOROPLASTIC"/>
    <property type="match status" value="1"/>
</dbReference>
<dbReference type="Pfam" id="PF08627">
    <property type="entry name" value="CRT-like"/>
    <property type="match status" value="1"/>
</dbReference>
<dbReference type="PIRSF" id="PIRSF037671">
    <property type="entry name" value="Transprt_Chloroquine_res"/>
    <property type="match status" value="1"/>
</dbReference>
<dbReference type="SUPFAM" id="SSF103481">
    <property type="entry name" value="Multidrug resistance efflux transporter EmrE"/>
    <property type="match status" value="1"/>
</dbReference>
<accession>Q550A6</accession>
<name>CRTP2_DICDI</name>
<protein>
    <recommendedName>
        <fullName>Crt homolog 2</fullName>
    </recommendedName>
    <alternativeName>
        <fullName>Chloroquine resistance transporter paralog 2</fullName>
        <shortName>DdCRTp2</shortName>
    </alternativeName>
</protein>
<comment type="function">
    <text evidence="1">Nutrient transporter (By similarity). Involved in maintaining the osmotic homeostasis of the digestive vacuole (By similarity).</text>
</comment>
<comment type="subcellular location">
    <subcellularLocation>
        <location evidence="1">Vacuole membrane</location>
        <topology evidence="2">Multi-pass membrane protein</topology>
    </subcellularLocation>
</comment>
<comment type="similarity">
    <text evidence="3">Belongs to the CRT-like transporter family.</text>
</comment>
<gene>
    <name type="primary">crtp2</name>
    <name type="ORF">DDB_G0277321</name>
</gene>
<evidence type="ECO:0000250" key="1">
    <source>
        <dbReference type="UniProtKB" id="Q9N623"/>
    </source>
</evidence>
<evidence type="ECO:0000255" key="2"/>
<evidence type="ECO:0000305" key="3"/>
<proteinExistence type="inferred from homology"/>
<reference key="1">
    <citation type="journal article" date="2002" name="Nature">
        <title>Sequence and analysis of chromosome 2 of Dictyostelium discoideum.</title>
        <authorList>
            <person name="Gloeckner G."/>
            <person name="Eichinger L."/>
            <person name="Szafranski K."/>
            <person name="Pachebat J.A."/>
            <person name="Bankier A.T."/>
            <person name="Dear P.H."/>
            <person name="Lehmann R."/>
            <person name="Baumgart C."/>
            <person name="Parra G."/>
            <person name="Abril J.F."/>
            <person name="Guigo R."/>
            <person name="Kumpf K."/>
            <person name="Tunggal B."/>
            <person name="Cox E.C."/>
            <person name="Quail M.A."/>
            <person name="Platzer M."/>
            <person name="Rosenthal A."/>
            <person name="Noegel A.A."/>
        </authorList>
    </citation>
    <scope>NUCLEOTIDE SEQUENCE [LARGE SCALE GENOMIC DNA]</scope>
    <source>
        <strain>AX4</strain>
    </source>
</reference>
<reference key="2">
    <citation type="journal article" date="2005" name="Nature">
        <title>The genome of the social amoeba Dictyostelium discoideum.</title>
        <authorList>
            <person name="Eichinger L."/>
            <person name="Pachebat J.A."/>
            <person name="Gloeckner G."/>
            <person name="Rajandream M.A."/>
            <person name="Sucgang R."/>
            <person name="Berriman M."/>
            <person name="Song J."/>
            <person name="Olsen R."/>
            <person name="Szafranski K."/>
            <person name="Xu Q."/>
            <person name="Tunggal B."/>
            <person name="Kummerfeld S."/>
            <person name="Madera M."/>
            <person name="Konfortov B.A."/>
            <person name="Rivero F."/>
            <person name="Bankier A.T."/>
            <person name="Lehmann R."/>
            <person name="Hamlin N."/>
            <person name="Davies R."/>
            <person name="Gaudet P."/>
            <person name="Fey P."/>
            <person name="Pilcher K."/>
            <person name="Chen G."/>
            <person name="Saunders D."/>
            <person name="Sodergren E.J."/>
            <person name="Davis P."/>
            <person name="Kerhornou A."/>
            <person name="Nie X."/>
            <person name="Hall N."/>
            <person name="Anjard C."/>
            <person name="Hemphill L."/>
            <person name="Bason N."/>
            <person name="Farbrother P."/>
            <person name="Desany B."/>
            <person name="Just E."/>
            <person name="Morio T."/>
            <person name="Rost R."/>
            <person name="Churcher C.M."/>
            <person name="Cooper J."/>
            <person name="Haydock S."/>
            <person name="van Driessche N."/>
            <person name="Cronin A."/>
            <person name="Goodhead I."/>
            <person name="Muzny D.M."/>
            <person name="Mourier T."/>
            <person name="Pain A."/>
            <person name="Lu M."/>
            <person name="Harper D."/>
            <person name="Lindsay R."/>
            <person name="Hauser H."/>
            <person name="James K.D."/>
            <person name="Quiles M."/>
            <person name="Madan Babu M."/>
            <person name="Saito T."/>
            <person name="Buchrieser C."/>
            <person name="Wardroper A."/>
            <person name="Felder M."/>
            <person name="Thangavelu M."/>
            <person name="Johnson D."/>
            <person name="Knights A."/>
            <person name="Loulseged H."/>
            <person name="Mungall K.L."/>
            <person name="Oliver K."/>
            <person name="Price C."/>
            <person name="Quail M.A."/>
            <person name="Urushihara H."/>
            <person name="Hernandez J."/>
            <person name="Rabbinowitsch E."/>
            <person name="Steffen D."/>
            <person name="Sanders M."/>
            <person name="Ma J."/>
            <person name="Kohara Y."/>
            <person name="Sharp S."/>
            <person name="Simmonds M.N."/>
            <person name="Spiegler S."/>
            <person name="Tivey A."/>
            <person name="Sugano S."/>
            <person name="White B."/>
            <person name="Walker D."/>
            <person name="Woodward J.R."/>
            <person name="Winckler T."/>
            <person name="Tanaka Y."/>
            <person name="Shaulsky G."/>
            <person name="Schleicher M."/>
            <person name="Weinstock G.M."/>
            <person name="Rosenthal A."/>
            <person name="Cox E.C."/>
            <person name="Chisholm R.L."/>
            <person name="Gibbs R.A."/>
            <person name="Loomis W.F."/>
            <person name="Platzer M."/>
            <person name="Kay R.R."/>
            <person name="Williams J.G."/>
            <person name="Dear P.H."/>
            <person name="Noegel A.A."/>
            <person name="Barrell B.G."/>
            <person name="Kuspa A."/>
        </authorList>
    </citation>
    <scope>NUCLEOTIDE SEQUENCE [LARGE SCALE GENOMIC DNA]</scope>
    <source>
        <strain>AX4</strain>
    </source>
</reference>
<reference key="3">
    <citation type="journal article" date="2005" name="J. Biol. Chem.">
        <title>Dictyostelium discoideum expresses a malaria chloroquine resistance mechanism upon transfection with mutant, but not wild-type, Plasmodium falciparum transporter PfCRT.</title>
        <authorList>
            <person name="Naude B."/>
            <person name="Brzostowski J.A."/>
            <person name="Kimmel A.R."/>
            <person name="Wellems T.E."/>
        </authorList>
    </citation>
    <scope>IDENTIFICATION</scope>
</reference>
<reference key="4">
    <citation type="journal article" date="2006" name="Mol. Biochem. Parasitol.">
        <title>Expression and function of pvcrt-o, a Plasmodium vivax ortholog of pfcrt, in Plasmodium falciparum and Dictyostelium discoideum.</title>
        <authorList>
            <person name="Sa J.M."/>
            <person name="Yamamoto M.M."/>
            <person name="Fernandez-Becerra C."/>
            <person name="de Azevedo M.F."/>
            <person name="Papakrivos J."/>
            <person name="Naude B."/>
            <person name="Wellems T.E."/>
            <person name="Del Portillo H.A."/>
        </authorList>
    </citation>
    <scope>IDENTIFICATION</scope>
</reference>
<organism>
    <name type="scientific">Dictyostelium discoideum</name>
    <name type="common">Social amoeba</name>
    <dbReference type="NCBI Taxonomy" id="44689"/>
    <lineage>
        <taxon>Eukaryota</taxon>
        <taxon>Amoebozoa</taxon>
        <taxon>Evosea</taxon>
        <taxon>Eumycetozoa</taxon>
        <taxon>Dictyostelia</taxon>
        <taxon>Dictyosteliales</taxon>
        <taxon>Dictyosteliaceae</taxon>
        <taxon>Dictyostelium</taxon>
    </lineage>
</organism>
<sequence length="484" mass="53676">MSEEKLPLLSPLNENDIENDYKDENLKSDLDKLSNVKKQSIIQRFKDYLKNSISKQTATVLVYVVLYILSGVINSLLLKKVMNVFTNYGFFLNQLTNYGYVPIFGAIVLYKILFTNDIPKDTRSFPQWKFVIMGALDAVTGYFVVIGGIKTTGPLQQLLNQSVIPFTMLLSFIFLKERYSLIQLGGALIIIGGVVVSLIPSLTGGNTSGNMLFYNFFYLISMIPYAFSNVYKAIGFSTVEDMDVWYLQYFDALYQSLVGTVLFPINNWLPPPSDMKFNQVIPQLKAGGKCLGGINTLIEQYNSTTGELLPTSCNYGDNLGCDNCHGAWVVVLIYMAVNVLYNVFILLVLKHAGATVFSIANTLRLPLTNIAFSFKFIMGSDSNPFSGLSVAGLCIILLGLGGYRVGSMIKQKKEAAASADSSSNTENKVIPKVFPTQFGEVSIIIKKKVPPKSQTHLRNQFFGKLGITVPESKLRNQNSIYGDQ</sequence>
<feature type="chain" id="PRO_0000385364" description="Crt homolog 2">
    <location>
        <begin position="1"/>
        <end position="484"/>
    </location>
</feature>
<feature type="topological domain" description="Cytoplasmic" evidence="3">
    <location>
        <begin position="1"/>
        <end position="57"/>
    </location>
</feature>
<feature type="transmembrane region" description="Helical" evidence="2">
    <location>
        <begin position="58"/>
        <end position="78"/>
    </location>
</feature>
<feature type="topological domain" description="Vacuolar" evidence="3">
    <location>
        <begin position="79"/>
        <end position="94"/>
    </location>
</feature>
<feature type="transmembrane region" description="Helical" evidence="2">
    <location>
        <begin position="95"/>
        <end position="115"/>
    </location>
</feature>
<feature type="topological domain" description="Cytoplasmic" evidence="3">
    <location>
        <begin position="116"/>
        <end position="128"/>
    </location>
</feature>
<feature type="transmembrane region" description="Helical" evidence="2">
    <location>
        <begin position="129"/>
        <end position="149"/>
    </location>
</feature>
<feature type="topological domain" description="Vacuolar" evidence="3">
    <location>
        <begin position="150"/>
        <end position="154"/>
    </location>
</feature>
<feature type="transmembrane region" description="Helical" evidence="2">
    <location>
        <begin position="155"/>
        <end position="175"/>
    </location>
</feature>
<feature type="topological domain" description="Cytoplasmic" evidence="3">
    <location>
        <begin position="176"/>
        <end position="178"/>
    </location>
</feature>
<feature type="transmembrane region" description="Helical" evidence="2">
    <location>
        <begin position="179"/>
        <end position="199"/>
    </location>
</feature>
<feature type="topological domain" description="Vacuolar" evidence="3">
    <location>
        <begin position="200"/>
        <end position="210"/>
    </location>
</feature>
<feature type="transmembrane region" description="Helical" evidence="2">
    <location>
        <begin position="211"/>
        <end position="231"/>
    </location>
</feature>
<feature type="topological domain" description="Cytoplasmic" evidence="3">
    <location>
        <begin position="232"/>
        <end position="244"/>
    </location>
</feature>
<feature type="transmembrane region" description="Helical" evidence="2">
    <location>
        <begin position="245"/>
        <end position="265"/>
    </location>
</feature>
<feature type="topological domain" description="Vacuolar" evidence="3">
    <location>
        <begin position="266"/>
        <end position="328"/>
    </location>
</feature>
<feature type="transmembrane region" description="Helical" evidence="2">
    <location>
        <begin position="329"/>
        <end position="349"/>
    </location>
</feature>
<feature type="topological domain" description="Cytoplasmic" evidence="3">
    <location>
        <begin position="350"/>
        <end position="355"/>
    </location>
</feature>
<feature type="transmembrane region" description="Helical" evidence="2">
    <location>
        <begin position="356"/>
        <end position="378"/>
    </location>
</feature>
<feature type="topological domain" description="Vacuolar" evidence="3">
    <location>
        <begin position="379"/>
        <end position="382"/>
    </location>
</feature>
<feature type="transmembrane region" description="Helical" evidence="2">
    <location>
        <begin position="383"/>
        <end position="403"/>
    </location>
</feature>
<feature type="topological domain" description="Cytoplasmic" evidence="3">
    <location>
        <begin position="404"/>
        <end position="484"/>
    </location>
</feature>
<feature type="glycosylation site" description="N-linked (GlcNAc...) asparagine" evidence="2">
    <location>
        <position position="206"/>
    </location>
</feature>
<feature type="glycosylation site" description="N-linked (GlcNAc...) asparagine" evidence="2">
    <location>
        <position position="302"/>
    </location>
</feature>